<feature type="chain" id="PRO_0000122947" description="DNA repair protein rlp1">
    <location>
        <begin position="1"/>
        <end position="363"/>
    </location>
</feature>
<keyword id="KW-0963">Cytoplasm</keyword>
<keyword id="KW-0227">DNA damage</keyword>
<keyword id="KW-0233">DNA recombination</keyword>
<keyword id="KW-0234">DNA repair</keyword>
<keyword id="KW-0469">Meiosis</keyword>
<keyword id="KW-0539">Nucleus</keyword>
<keyword id="KW-1185">Reference proteome</keyword>
<gene>
    <name evidence="5" type="primary">rlp1</name>
    <name type="ORF">SPBC1685.11</name>
</gene>
<dbReference type="EMBL" id="CU329671">
    <property type="protein sequence ID" value="CAA20059.1"/>
    <property type="molecule type" value="Genomic_DNA"/>
</dbReference>
<dbReference type="PIR" id="T39527">
    <property type="entry name" value="T39527"/>
</dbReference>
<dbReference type="RefSeq" id="NP_595215.1">
    <property type="nucleotide sequence ID" value="NM_001021122.2"/>
</dbReference>
<dbReference type="BioGRID" id="276321">
    <property type="interactions" value="25"/>
</dbReference>
<dbReference type="FunCoup" id="O74331">
    <property type="interactions" value="2"/>
</dbReference>
<dbReference type="IntAct" id="O74331">
    <property type="interactions" value="3"/>
</dbReference>
<dbReference type="MINT" id="O74331"/>
<dbReference type="STRING" id="284812.O74331"/>
<dbReference type="PaxDb" id="4896-SPBC1685.11.1"/>
<dbReference type="EnsemblFungi" id="SPBC1685.11.1">
    <property type="protein sequence ID" value="SPBC1685.11.1:pep"/>
    <property type="gene ID" value="SPBC1685.11"/>
</dbReference>
<dbReference type="GeneID" id="2539770"/>
<dbReference type="KEGG" id="spo:2539770"/>
<dbReference type="PomBase" id="SPBC1685.11">
    <property type="gene designation" value="rlp1"/>
</dbReference>
<dbReference type="VEuPathDB" id="FungiDB:SPBC1685.11"/>
<dbReference type="HOGENOM" id="CLU_776492_0_0_1"/>
<dbReference type="InParanoid" id="O74331"/>
<dbReference type="OMA" id="ASKMLGC"/>
<dbReference type="PRO" id="PR:O74331"/>
<dbReference type="Proteomes" id="UP000002485">
    <property type="component" value="Chromosome II"/>
</dbReference>
<dbReference type="GO" id="GO:0005829">
    <property type="term" value="C:cytosol"/>
    <property type="evidence" value="ECO:0007005"/>
    <property type="project" value="PomBase"/>
</dbReference>
<dbReference type="GO" id="GO:0005634">
    <property type="term" value="C:nucleus"/>
    <property type="evidence" value="ECO:0007005"/>
    <property type="project" value="PomBase"/>
</dbReference>
<dbReference type="GO" id="GO:0016887">
    <property type="term" value="F:ATP hydrolysis activity"/>
    <property type="evidence" value="ECO:0000303"/>
    <property type="project" value="PomBase"/>
</dbReference>
<dbReference type="GO" id="GO:0000724">
    <property type="term" value="P:double-strand break repair via homologous recombination"/>
    <property type="evidence" value="ECO:0000315"/>
    <property type="project" value="PomBase"/>
</dbReference>
<dbReference type="GO" id="GO:0006312">
    <property type="term" value="P:mitotic recombination"/>
    <property type="evidence" value="ECO:0000315"/>
    <property type="project" value="PomBase"/>
</dbReference>
<dbReference type="GO" id="GO:0007131">
    <property type="term" value="P:reciprocal meiotic recombination"/>
    <property type="evidence" value="ECO:0000315"/>
    <property type="project" value="PomBase"/>
</dbReference>
<dbReference type="GO" id="GO:0000725">
    <property type="term" value="P:recombinational repair"/>
    <property type="evidence" value="ECO:0000315"/>
    <property type="project" value="PomBase"/>
</dbReference>
<dbReference type="Gene3D" id="3.40.50.300">
    <property type="entry name" value="P-loop containing nucleotide triphosphate hydrolases"/>
    <property type="match status" value="1"/>
</dbReference>
<dbReference type="InterPro" id="IPR027417">
    <property type="entry name" value="P-loop_NTPase"/>
</dbReference>
<dbReference type="SUPFAM" id="SSF52540">
    <property type="entry name" value="P-loop containing nucleoside triphosphate hydrolases"/>
    <property type="match status" value="1"/>
</dbReference>
<reference key="1">
    <citation type="journal article" date="2002" name="Nature">
        <title>The genome sequence of Schizosaccharomyces pombe.</title>
        <authorList>
            <person name="Wood V."/>
            <person name="Gwilliam R."/>
            <person name="Rajandream M.A."/>
            <person name="Lyne M.H."/>
            <person name="Lyne R."/>
            <person name="Stewart A."/>
            <person name="Sgouros J.G."/>
            <person name="Peat N."/>
            <person name="Hayles J."/>
            <person name="Baker S.G."/>
            <person name="Basham D."/>
            <person name="Bowman S."/>
            <person name="Brooks K."/>
            <person name="Brown D."/>
            <person name="Brown S."/>
            <person name="Chillingworth T."/>
            <person name="Churcher C.M."/>
            <person name="Collins M."/>
            <person name="Connor R."/>
            <person name="Cronin A."/>
            <person name="Davis P."/>
            <person name="Feltwell T."/>
            <person name="Fraser A."/>
            <person name="Gentles S."/>
            <person name="Goble A."/>
            <person name="Hamlin N."/>
            <person name="Harris D.E."/>
            <person name="Hidalgo J."/>
            <person name="Hodgson G."/>
            <person name="Holroyd S."/>
            <person name="Hornsby T."/>
            <person name="Howarth S."/>
            <person name="Huckle E.J."/>
            <person name="Hunt S."/>
            <person name="Jagels K."/>
            <person name="James K.D."/>
            <person name="Jones L."/>
            <person name="Jones M."/>
            <person name="Leather S."/>
            <person name="McDonald S."/>
            <person name="McLean J."/>
            <person name="Mooney P."/>
            <person name="Moule S."/>
            <person name="Mungall K.L."/>
            <person name="Murphy L.D."/>
            <person name="Niblett D."/>
            <person name="Odell C."/>
            <person name="Oliver K."/>
            <person name="O'Neil S."/>
            <person name="Pearson D."/>
            <person name="Quail M.A."/>
            <person name="Rabbinowitsch E."/>
            <person name="Rutherford K.M."/>
            <person name="Rutter S."/>
            <person name="Saunders D."/>
            <person name="Seeger K."/>
            <person name="Sharp S."/>
            <person name="Skelton J."/>
            <person name="Simmonds M.N."/>
            <person name="Squares R."/>
            <person name="Squares S."/>
            <person name="Stevens K."/>
            <person name="Taylor K."/>
            <person name="Taylor R.G."/>
            <person name="Tivey A."/>
            <person name="Walsh S.V."/>
            <person name="Warren T."/>
            <person name="Whitehead S."/>
            <person name="Woodward J.R."/>
            <person name="Volckaert G."/>
            <person name="Aert R."/>
            <person name="Robben J."/>
            <person name="Grymonprez B."/>
            <person name="Weltjens I."/>
            <person name="Vanstreels E."/>
            <person name="Rieger M."/>
            <person name="Schaefer M."/>
            <person name="Mueller-Auer S."/>
            <person name="Gabel C."/>
            <person name="Fuchs M."/>
            <person name="Duesterhoeft A."/>
            <person name="Fritzc C."/>
            <person name="Holzer E."/>
            <person name="Moestl D."/>
            <person name="Hilbert H."/>
            <person name="Borzym K."/>
            <person name="Langer I."/>
            <person name="Beck A."/>
            <person name="Lehrach H."/>
            <person name="Reinhardt R."/>
            <person name="Pohl T.M."/>
            <person name="Eger P."/>
            <person name="Zimmermann W."/>
            <person name="Wedler H."/>
            <person name="Wambutt R."/>
            <person name="Purnelle B."/>
            <person name="Goffeau A."/>
            <person name="Cadieu E."/>
            <person name="Dreano S."/>
            <person name="Gloux S."/>
            <person name="Lelaure V."/>
            <person name="Mottier S."/>
            <person name="Galibert F."/>
            <person name="Aves S.J."/>
            <person name="Xiang Z."/>
            <person name="Hunt C."/>
            <person name="Moore K."/>
            <person name="Hurst S.M."/>
            <person name="Lucas M."/>
            <person name="Rochet M."/>
            <person name="Gaillardin C."/>
            <person name="Tallada V.A."/>
            <person name="Garzon A."/>
            <person name="Thode G."/>
            <person name="Daga R.R."/>
            <person name="Cruzado L."/>
            <person name="Jimenez J."/>
            <person name="Sanchez M."/>
            <person name="del Rey F."/>
            <person name="Benito J."/>
            <person name="Dominguez A."/>
            <person name="Revuelta J.L."/>
            <person name="Moreno S."/>
            <person name="Armstrong J."/>
            <person name="Forsburg S.L."/>
            <person name="Cerutti L."/>
            <person name="Lowe T."/>
            <person name="McCombie W.R."/>
            <person name="Paulsen I."/>
            <person name="Potashkin J."/>
            <person name="Shpakovski G.V."/>
            <person name="Ussery D."/>
            <person name="Barrell B.G."/>
            <person name="Nurse P."/>
        </authorList>
    </citation>
    <scope>NUCLEOTIDE SEQUENCE [LARGE SCALE GENOMIC DNA]</scope>
    <source>
        <strain>972 / ATCC 24843</strain>
    </source>
</reference>
<reference evidence="4" key="2">
    <citation type="journal article" date="2003" name="Genetics">
        <title>Five RecA-like proteins of Schizosaccharomyces pombe are involved in meiotic recombination.</title>
        <authorList>
            <person name="Grishchuk A.L."/>
            <person name="Kohli J."/>
        </authorList>
    </citation>
    <scope>FUNCTION</scope>
</reference>
<reference evidence="4" key="3">
    <citation type="journal article" date="2004" name="DNA Repair">
        <title>Identification and characterization of the rlp1+, the novel Rad51 paralog in the fission yeast Schizosaccharomyces pombe.</title>
        <authorList>
            <person name="Khasanov F.K."/>
            <person name="Salakhova A.F."/>
            <person name="Chepurnaja O.V."/>
            <person name="Korolev V.G."/>
            <person name="Bashkirov V.I."/>
        </authorList>
    </citation>
    <scope>FUNCTION</scope>
</reference>
<reference key="4">
    <citation type="journal article" date="2006" name="EMBO J.">
        <title>Sws1 is a conserved regulator of homologous recombination in eukaryotic cells.</title>
        <authorList>
            <person name="Martin V."/>
            <person name="Chahwan C."/>
            <person name="Gao H."/>
            <person name="Blais V."/>
            <person name="Wohlschlegel J."/>
            <person name="Yates J.R. III"/>
            <person name="McGowan C.H."/>
            <person name="Russell P."/>
        </authorList>
    </citation>
    <scope>FUNCTION</scope>
    <scope>INTERACTION WITH RDL1 AND SWS1</scope>
    <scope>SUBCELLULAR LOCATION</scope>
</reference>
<reference key="5">
    <citation type="journal article" date="2006" name="Nat. Biotechnol.">
        <title>ORFeome cloning and global analysis of protein localization in the fission yeast Schizosaccharomyces pombe.</title>
        <authorList>
            <person name="Matsuyama A."/>
            <person name="Arai R."/>
            <person name="Yashiroda Y."/>
            <person name="Shirai A."/>
            <person name="Kamata A."/>
            <person name="Sekido S."/>
            <person name="Kobayashi Y."/>
            <person name="Hashimoto A."/>
            <person name="Hamamoto M."/>
            <person name="Hiraoka Y."/>
            <person name="Horinouchi S."/>
            <person name="Yoshida M."/>
        </authorList>
    </citation>
    <scope>SUBCELLULAR LOCATION [LARGE SCALE ANALYSIS]</scope>
</reference>
<comment type="function">
    <text evidence="1 2 3">Required for normal levels of meiotic recombination. Acts in the recombinational pathway of double-strand break (DSB) repair together with rhp51, rhp55 and rad22. Required for the full extent of DNA recombination and cell survival under condition of a replication fork collapse.</text>
</comment>
<comment type="subunit">
    <text evidence="3">Interacts with rdl1 and sws1.</text>
</comment>
<comment type="interaction">
    <interactant intactId="EBI-8527133">
        <id>O74331</id>
    </interactant>
    <interactant intactId="EBI-8527040">
        <id>O13600</id>
        <label>sws1</label>
    </interactant>
    <organismsDiffer>false</organismsDiffer>
    <experiments>2</experiments>
</comment>
<comment type="subcellular location">
    <subcellularLocation>
        <location>Cytoplasm</location>
    </subcellularLocation>
    <subcellularLocation>
        <location>Nucleus</location>
    </subcellularLocation>
</comment>
<comment type="similarity">
    <text evidence="4">Belongs to the RecA family. RAD51 subfamily.</text>
</comment>
<accession>O74331</accession>
<organism>
    <name type="scientific">Schizosaccharomyces pombe (strain 972 / ATCC 24843)</name>
    <name type="common">Fission yeast</name>
    <dbReference type="NCBI Taxonomy" id="284812"/>
    <lineage>
        <taxon>Eukaryota</taxon>
        <taxon>Fungi</taxon>
        <taxon>Dikarya</taxon>
        <taxon>Ascomycota</taxon>
        <taxon>Taphrinomycotina</taxon>
        <taxon>Schizosaccharomycetes</taxon>
        <taxon>Schizosaccharomycetales</taxon>
        <taxon>Schizosaccharomycetaceae</taxon>
        <taxon>Schizosaccharomyces</taxon>
    </lineage>
</organism>
<sequence length="363" mass="41654">MNAAEWVAELKRKSQIESFKEQKGLVYDDHIEKVLYSGSVNGTLLVIEGNSCSGKTELLYHLASNVLLRSSQELVLIVSSEWDWSIKRLTFILHERLISSRGVSQTCKCNCAVKLENESTVHLQNAAREDGTDEDINSNSVNDVSLSSGETMLQFPEHEEQHECNREMEQLYESASSTVYPCSFWEDAERKIDAQCAILWPMEFSGVVESIPQSTKDLLRIWKEAKIQMHEDFRCNKTEFNEACFDASSSRLGCILMDGLSTFYWQLRLERGYTQVYADLQNRLCTSSKLFGCPVVCTNWLLNNKQHLPIQCKRFRSERRANARFYLENCVSKLGETFYLSVKGVQTKTEMASPYSQQEMEKV</sequence>
<protein>
    <recommendedName>
        <fullName>DNA repair protein rlp1</fullName>
    </recommendedName>
    <alternativeName>
        <fullName>RecA-like protein 1</fullName>
    </alternativeName>
</protein>
<name>RLP1_SCHPO</name>
<evidence type="ECO:0000269" key="1">
    <source>
    </source>
</evidence>
<evidence type="ECO:0000269" key="2">
    <source>
    </source>
</evidence>
<evidence type="ECO:0000269" key="3">
    <source>
    </source>
</evidence>
<evidence type="ECO:0000305" key="4"/>
<evidence type="ECO:0000312" key="5">
    <source>
        <dbReference type="EMBL" id="CAA20059.1"/>
    </source>
</evidence>
<proteinExistence type="evidence at protein level"/>